<organism>
    <name type="scientific">Thiobacillus denitrificans (strain ATCC 25259 / T1)</name>
    <dbReference type="NCBI Taxonomy" id="292415"/>
    <lineage>
        <taxon>Bacteria</taxon>
        <taxon>Pseudomonadati</taxon>
        <taxon>Pseudomonadota</taxon>
        <taxon>Betaproteobacteria</taxon>
        <taxon>Nitrosomonadales</taxon>
        <taxon>Thiobacillaceae</taxon>
        <taxon>Thiobacillus</taxon>
    </lineage>
</organism>
<comment type="similarity">
    <text evidence="1">Belongs to the universal ribosomal protein uS2 family.</text>
</comment>
<protein>
    <recommendedName>
        <fullName evidence="1">Small ribosomal subunit protein uS2</fullName>
    </recommendedName>
    <alternativeName>
        <fullName evidence="2">30S ribosomal protein S2</fullName>
    </alternativeName>
</protein>
<sequence length="248" mass="27488">MSVTMRQMLEAGVHFGHQTRFWNPRMAPFIFGHRNKIHIVNLEKSLPMFQEAQKFVRQLSANKGNVLFVGTKRAARDIVREEAQRAGMPYVDQRWLGGMLTNFKTVKQSIKRLNDLEAQIAEPGRLSKKEILTVQREVDKLNRSLGGIREMGGLPDALFIIDVGYQKGAVVEAKKLGIPVIGVVDTNNSPEGVDYVIPGNDDSARAIRLYARGMADAALEGRAQVISEIVGGEEFVEVEEEEGGVAAE</sequence>
<accession>Q3SKN9</accession>
<name>RS2_THIDA</name>
<keyword id="KW-1185">Reference proteome</keyword>
<keyword id="KW-0687">Ribonucleoprotein</keyword>
<keyword id="KW-0689">Ribosomal protein</keyword>
<gene>
    <name evidence="1" type="primary">rpsB</name>
    <name type="ordered locus">Tbd_0785</name>
</gene>
<evidence type="ECO:0000255" key="1">
    <source>
        <dbReference type="HAMAP-Rule" id="MF_00291"/>
    </source>
</evidence>
<evidence type="ECO:0000305" key="2"/>
<reference key="1">
    <citation type="journal article" date="2006" name="J. Bacteriol.">
        <title>The genome sequence of the obligately chemolithoautotrophic, facultatively anaerobic bacterium Thiobacillus denitrificans.</title>
        <authorList>
            <person name="Beller H.R."/>
            <person name="Chain P.S."/>
            <person name="Letain T.E."/>
            <person name="Chakicherla A."/>
            <person name="Larimer F.W."/>
            <person name="Richardson P.M."/>
            <person name="Coleman M.A."/>
            <person name="Wood A.P."/>
            <person name="Kelly D.P."/>
        </authorList>
    </citation>
    <scope>NUCLEOTIDE SEQUENCE [LARGE SCALE GENOMIC DNA]</scope>
    <source>
        <strain>ATCC 25259 / T1</strain>
    </source>
</reference>
<proteinExistence type="inferred from homology"/>
<feature type="chain" id="PRO_1000004108" description="Small ribosomal subunit protein uS2">
    <location>
        <begin position="1"/>
        <end position="248"/>
    </location>
</feature>
<dbReference type="EMBL" id="CP000116">
    <property type="protein sequence ID" value="AAZ96738.1"/>
    <property type="molecule type" value="Genomic_DNA"/>
</dbReference>
<dbReference type="RefSeq" id="WP_011311297.1">
    <property type="nucleotide sequence ID" value="NC_007404.1"/>
</dbReference>
<dbReference type="SMR" id="Q3SKN9"/>
<dbReference type="STRING" id="292415.Tbd_0785"/>
<dbReference type="KEGG" id="tbd:Tbd_0785"/>
<dbReference type="eggNOG" id="COG0052">
    <property type="taxonomic scope" value="Bacteria"/>
</dbReference>
<dbReference type="HOGENOM" id="CLU_040318_1_2_4"/>
<dbReference type="OrthoDB" id="9808036at2"/>
<dbReference type="Proteomes" id="UP000008291">
    <property type="component" value="Chromosome"/>
</dbReference>
<dbReference type="GO" id="GO:0022627">
    <property type="term" value="C:cytosolic small ribosomal subunit"/>
    <property type="evidence" value="ECO:0007669"/>
    <property type="project" value="TreeGrafter"/>
</dbReference>
<dbReference type="GO" id="GO:0003735">
    <property type="term" value="F:structural constituent of ribosome"/>
    <property type="evidence" value="ECO:0007669"/>
    <property type="project" value="InterPro"/>
</dbReference>
<dbReference type="GO" id="GO:0006412">
    <property type="term" value="P:translation"/>
    <property type="evidence" value="ECO:0007669"/>
    <property type="project" value="UniProtKB-UniRule"/>
</dbReference>
<dbReference type="CDD" id="cd01425">
    <property type="entry name" value="RPS2"/>
    <property type="match status" value="1"/>
</dbReference>
<dbReference type="FunFam" id="1.10.287.610:FF:000001">
    <property type="entry name" value="30S ribosomal protein S2"/>
    <property type="match status" value="1"/>
</dbReference>
<dbReference type="Gene3D" id="3.40.50.10490">
    <property type="entry name" value="Glucose-6-phosphate isomerase like protein, domain 1"/>
    <property type="match status" value="1"/>
</dbReference>
<dbReference type="Gene3D" id="1.10.287.610">
    <property type="entry name" value="Helix hairpin bin"/>
    <property type="match status" value="1"/>
</dbReference>
<dbReference type="HAMAP" id="MF_00291_B">
    <property type="entry name" value="Ribosomal_uS2_B"/>
    <property type="match status" value="1"/>
</dbReference>
<dbReference type="InterPro" id="IPR001865">
    <property type="entry name" value="Ribosomal_uS2"/>
</dbReference>
<dbReference type="InterPro" id="IPR005706">
    <property type="entry name" value="Ribosomal_uS2_bac/mit/plastid"/>
</dbReference>
<dbReference type="InterPro" id="IPR018130">
    <property type="entry name" value="Ribosomal_uS2_CS"/>
</dbReference>
<dbReference type="InterPro" id="IPR023591">
    <property type="entry name" value="Ribosomal_uS2_flav_dom_sf"/>
</dbReference>
<dbReference type="NCBIfam" id="TIGR01011">
    <property type="entry name" value="rpsB_bact"/>
    <property type="match status" value="1"/>
</dbReference>
<dbReference type="PANTHER" id="PTHR12534">
    <property type="entry name" value="30S RIBOSOMAL PROTEIN S2 PROKARYOTIC AND ORGANELLAR"/>
    <property type="match status" value="1"/>
</dbReference>
<dbReference type="PANTHER" id="PTHR12534:SF0">
    <property type="entry name" value="SMALL RIBOSOMAL SUBUNIT PROTEIN US2M"/>
    <property type="match status" value="1"/>
</dbReference>
<dbReference type="Pfam" id="PF00318">
    <property type="entry name" value="Ribosomal_S2"/>
    <property type="match status" value="1"/>
</dbReference>
<dbReference type="PRINTS" id="PR00395">
    <property type="entry name" value="RIBOSOMALS2"/>
</dbReference>
<dbReference type="SUPFAM" id="SSF52313">
    <property type="entry name" value="Ribosomal protein S2"/>
    <property type="match status" value="1"/>
</dbReference>
<dbReference type="PROSITE" id="PS00962">
    <property type="entry name" value="RIBOSOMAL_S2_1"/>
    <property type="match status" value="1"/>
</dbReference>